<organism>
    <name type="scientific">Escherichia coli O7:K1 (strain IAI39 / ExPEC)</name>
    <dbReference type="NCBI Taxonomy" id="585057"/>
    <lineage>
        <taxon>Bacteria</taxon>
        <taxon>Pseudomonadati</taxon>
        <taxon>Pseudomonadota</taxon>
        <taxon>Gammaproteobacteria</taxon>
        <taxon>Enterobacterales</taxon>
        <taxon>Enterobacteriaceae</taxon>
        <taxon>Escherichia</taxon>
    </lineage>
</organism>
<comment type="function">
    <text evidence="1">Plays an essential role in the initiation and regulation of chromosomal replication. ATP-DnaA binds to the origin of replication (oriC) to initiate formation of the DNA replication initiation complex once per cell cycle. Binds the DnaA box (a 9 base pair repeat at the origin) and separates the double-stranded (ds)DNA. Forms a right-handed helical filament on oriC DNA; dsDNA binds to the exterior of the filament while single-stranded (ss)DNA is stabiized in the filament's interior. The ATP-DnaA-oriC complex binds and stabilizes one strand of the AT-rich DNA unwinding element (DUE), permitting loading of DNA polymerase. After initiation quickly degrades to an ADP-DnaA complex that is not apt for DNA replication. Binds acidic phospholipids.</text>
</comment>
<comment type="subunit">
    <text evidence="1">Oligomerizes as a right-handed, spiral filament on DNA at oriC.</text>
</comment>
<comment type="subcellular location">
    <subcellularLocation>
        <location evidence="1">Cytoplasm</location>
    </subcellularLocation>
</comment>
<comment type="domain">
    <text evidence="1">Domain I is involved in oligomerization and binding regulators, domain II is flexibile and of varying length in different bacteria, domain III forms the AAA+ region, while domain IV binds dsDNA.</text>
</comment>
<comment type="similarity">
    <text evidence="1">Belongs to the DnaA family.</text>
</comment>
<name>DNAA_ECO7I</name>
<accession>B7NR04</accession>
<gene>
    <name evidence="1" type="primary">dnaA</name>
    <name type="ordered locus">ECIAI39_4306</name>
</gene>
<dbReference type="EMBL" id="CU928164">
    <property type="protein sequence ID" value="CAR20412.1"/>
    <property type="molecule type" value="Genomic_DNA"/>
</dbReference>
<dbReference type="RefSeq" id="WP_000059111.1">
    <property type="nucleotide sequence ID" value="NC_011750.1"/>
</dbReference>
<dbReference type="RefSeq" id="YP_002410180.1">
    <property type="nucleotide sequence ID" value="NC_011750.1"/>
</dbReference>
<dbReference type="SMR" id="B7NR04"/>
<dbReference type="STRING" id="585057.ECIAI39_4306"/>
<dbReference type="GeneID" id="93778443"/>
<dbReference type="KEGG" id="ect:ECIAI39_4306"/>
<dbReference type="PATRIC" id="fig|585057.6.peg.4452"/>
<dbReference type="HOGENOM" id="CLU_026910_0_1_6"/>
<dbReference type="Proteomes" id="UP000000749">
    <property type="component" value="Chromosome"/>
</dbReference>
<dbReference type="GO" id="GO:0005737">
    <property type="term" value="C:cytoplasm"/>
    <property type="evidence" value="ECO:0007669"/>
    <property type="project" value="UniProtKB-SubCell"/>
</dbReference>
<dbReference type="GO" id="GO:0005886">
    <property type="term" value="C:plasma membrane"/>
    <property type="evidence" value="ECO:0007669"/>
    <property type="project" value="TreeGrafter"/>
</dbReference>
<dbReference type="GO" id="GO:0005524">
    <property type="term" value="F:ATP binding"/>
    <property type="evidence" value="ECO:0007669"/>
    <property type="project" value="UniProtKB-UniRule"/>
</dbReference>
<dbReference type="GO" id="GO:0016887">
    <property type="term" value="F:ATP hydrolysis activity"/>
    <property type="evidence" value="ECO:0007669"/>
    <property type="project" value="InterPro"/>
</dbReference>
<dbReference type="GO" id="GO:0003688">
    <property type="term" value="F:DNA replication origin binding"/>
    <property type="evidence" value="ECO:0007669"/>
    <property type="project" value="UniProtKB-UniRule"/>
</dbReference>
<dbReference type="GO" id="GO:0008289">
    <property type="term" value="F:lipid binding"/>
    <property type="evidence" value="ECO:0007669"/>
    <property type="project" value="UniProtKB-KW"/>
</dbReference>
<dbReference type="GO" id="GO:0006270">
    <property type="term" value="P:DNA replication initiation"/>
    <property type="evidence" value="ECO:0007669"/>
    <property type="project" value="UniProtKB-UniRule"/>
</dbReference>
<dbReference type="GO" id="GO:0006275">
    <property type="term" value="P:regulation of DNA replication"/>
    <property type="evidence" value="ECO:0007669"/>
    <property type="project" value="UniProtKB-UniRule"/>
</dbReference>
<dbReference type="CDD" id="cd00009">
    <property type="entry name" value="AAA"/>
    <property type="match status" value="1"/>
</dbReference>
<dbReference type="CDD" id="cd06571">
    <property type="entry name" value="Bac_DnaA_C"/>
    <property type="match status" value="1"/>
</dbReference>
<dbReference type="FunFam" id="1.10.1750.10:FF:000001">
    <property type="entry name" value="Chromosomal replication initiator protein DnaA"/>
    <property type="match status" value="1"/>
</dbReference>
<dbReference type="FunFam" id="1.10.8.60:FF:000003">
    <property type="entry name" value="Chromosomal replication initiator protein DnaA"/>
    <property type="match status" value="1"/>
</dbReference>
<dbReference type="FunFam" id="3.30.300.180:FF:000001">
    <property type="entry name" value="Chromosomal replication initiator protein DnaA"/>
    <property type="match status" value="1"/>
</dbReference>
<dbReference type="FunFam" id="3.40.50.300:FF:000103">
    <property type="entry name" value="Chromosomal replication initiator protein DnaA"/>
    <property type="match status" value="1"/>
</dbReference>
<dbReference type="Gene3D" id="1.10.1750.10">
    <property type="match status" value="1"/>
</dbReference>
<dbReference type="Gene3D" id="1.10.8.60">
    <property type="match status" value="1"/>
</dbReference>
<dbReference type="Gene3D" id="3.30.300.180">
    <property type="match status" value="1"/>
</dbReference>
<dbReference type="Gene3D" id="3.40.50.300">
    <property type="entry name" value="P-loop containing nucleotide triphosphate hydrolases"/>
    <property type="match status" value="1"/>
</dbReference>
<dbReference type="HAMAP" id="MF_00377">
    <property type="entry name" value="DnaA_bact"/>
    <property type="match status" value="1"/>
</dbReference>
<dbReference type="InterPro" id="IPR003593">
    <property type="entry name" value="AAA+_ATPase"/>
</dbReference>
<dbReference type="InterPro" id="IPR001957">
    <property type="entry name" value="Chromosome_initiator_DnaA"/>
</dbReference>
<dbReference type="InterPro" id="IPR020591">
    <property type="entry name" value="Chromosome_initiator_DnaA-like"/>
</dbReference>
<dbReference type="InterPro" id="IPR018312">
    <property type="entry name" value="Chromosome_initiator_DnaA_CS"/>
</dbReference>
<dbReference type="InterPro" id="IPR013159">
    <property type="entry name" value="DnaA_C"/>
</dbReference>
<dbReference type="InterPro" id="IPR013317">
    <property type="entry name" value="DnaA_dom"/>
</dbReference>
<dbReference type="InterPro" id="IPR024633">
    <property type="entry name" value="DnaA_N_dom"/>
</dbReference>
<dbReference type="InterPro" id="IPR038454">
    <property type="entry name" value="DnaA_N_sf"/>
</dbReference>
<dbReference type="InterPro" id="IPR027417">
    <property type="entry name" value="P-loop_NTPase"/>
</dbReference>
<dbReference type="InterPro" id="IPR010921">
    <property type="entry name" value="Trp_repressor/repl_initiator"/>
</dbReference>
<dbReference type="NCBIfam" id="TIGR00362">
    <property type="entry name" value="DnaA"/>
    <property type="match status" value="1"/>
</dbReference>
<dbReference type="PANTHER" id="PTHR30050">
    <property type="entry name" value="CHROMOSOMAL REPLICATION INITIATOR PROTEIN DNAA"/>
    <property type="match status" value="1"/>
</dbReference>
<dbReference type="PANTHER" id="PTHR30050:SF2">
    <property type="entry name" value="CHROMOSOMAL REPLICATION INITIATOR PROTEIN DNAA"/>
    <property type="match status" value="1"/>
</dbReference>
<dbReference type="Pfam" id="PF00308">
    <property type="entry name" value="Bac_DnaA"/>
    <property type="match status" value="1"/>
</dbReference>
<dbReference type="Pfam" id="PF08299">
    <property type="entry name" value="Bac_DnaA_C"/>
    <property type="match status" value="1"/>
</dbReference>
<dbReference type="Pfam" id="PF11638">
    <property type="entry name" value="DnaA_N"/>
    <property type="match status" value="1"/>
</dbReference>
<dbReference type="PRINTS" id="PR00051">
    <property type="entry name" value="DNAA"/>
</dbReference>
<dbReference type="SMART" id="SM00382">
    <property type="entry name" value="AAA"/>
    <property type="match status" value="1"/>
</dbReference>
<dbReference type="SMART" id="SM00760">
    <property type="entry name" value="Bac_DnaA_C"/>
    <property type="match status" value="1"/>
</dbReference>
<dbReference type="SUPFAM" id="SSF52540">
    <property type="entry name" value="P-loop containing nucleoside triphosphate hydrolases"/>
    <property type="match status" value="1"/>
</dbReference>
<dbReference type="SUPFAM" id="SSF48295">
    <property type="entry name" value="TrpR-like"/>
    <property type="match status" value="1"/>
</dbReference>
<dbReference type="PROSITE" id="PS01008">
    <property type="entry name" value="DNAA"/>
    <property type="match status" value="1"/>
</dbReference>
<keyword id="KW-0067">ATP-binding</keyword>
<keyword id="KW-0963">Cytoplasm</keyword>
<keyword id="KW-0235">DNA replication</keyword>
<keyword id="KW-0238">DNA-binding</keyword>
<keyword id="KW-0446">Lipid-binding</keyword>
<keyword id="KW-0547">Nucleotide-binding</keyword>
<sequence length="467" mass="52551">MSLSLWQQCLARLQDELPATEFSMWIRPLQAELSDNTLALYAPNRFVLDWVRDKYLNNINGLLTSFCGADAPQLRFEVGTKPVTQTPQAAVTSNVAAPAQVAQTQPQRAAPSTRSGWDNVPAPAEPTYRSNVNVKHTFDNFVEGKSNQLARAAARQVADNPGGAYNPLFLYGGTGLGKTHLLHAVGNGIMARKPNAKVVYMHSERFVQDMVKALQNNAIEEFKRYYRSVDALLIDDIQFFANKERSQEEFFHTFNALLEGNQQIILTSDRYPKEINGVEDRLKSRFGWGLTVAIEPPELETRVAILMKKADENDIRLPGEVAFFIAKRLRSNVRELEGALNRVIANANFTGRAITIDFVREALRDLLALQEKLVTIDNIQKTVAEYYKIKVADLLSKRRSRSVARPRQMAMALAKELTNHSLPEIGDAFGGRDHTTVLHACRKIEQLREESHDIKEDFSNLIRTLSS</sequence>
<reference key="1">
    <citation type="journal article" date="2009" name="PLoS Genet.">
        <title>Organised genome dynamics in the Escherichia coli species results in highly diverse adaptive paths.</title>
        <authorList>
            <person name="Touchon M."/>
            <person name="Hoede C."/>
            <person name="Tenaillon O."/>
            <person name="Barbe V."/>
            <person name="Baeriswyl S."/>
            <person name="Bidet P."/>
            <person name="Bingen E."/>
            <person name="Bonacorsi S."/>
            <person name="Bouchier C."/>
            <person name="Bouvet O."/>
            <person name="Calteau A."/>
            <person name="Chiapello H."/>
            <person name="Clermont O."/>
            <person name="Cruveiller S."/>
            <person name="Danchin A."/>
            <person name="Diard M."/>
            <person name="Dossat C."/>
            <person name="Karoui M.E."/>
            <person name="Frapy E."/>
            <person name="Garry L."/>
            <person name="Ghigo J.M."/>
            <person name="Gilles A.M."/>
            <person name="Johnson J."/>
            <person name="Le Bouguenec C."/>
            <person name="Lescat M."/>
            <person name="Mangenot S."/>
            <person name="Martinez-Jehanne V."/>
            <person name="Matic I."/>
            <person name="Nassif X."/>
            <person name="Oztas S."/>
            <person name="Petit M.A."/>
            <person name="Pichon C."/>
            <person name="Rouy Z."/>
            <person name="Ruf C.S."/>
            <person name="Schneider D."/>
            <person name="Tourret J."/>
            <person name="Vacherie B."/>
            <person name="Vallenet D."/>
            <person name="Medigue C."/>
            <person name="Rocha E.P.C."/>
            <person name="Denamur E."/>
        </authorList>
    </citation>
    <scope>NUCLEOTIDE SEQUENCE [LARGE SCALE GENOMIC DNA]</scope>
    <source>
        <strain>IAI39 / ExPEC</strain>
    </source>
</reference>
<protein>
    <recommendedName>
        <fullName evidence="1">Chromosomal replication initiator protein DnaA</fullName>
    </recommendedName>
</protein>
<evidence type="ECO:0000255" key="1">
    <source>
        <dbReference type="HAMAP-Rule" id="MF_00377"/>
    </source>
</evidence>
<evidence type="ECO:0000256" key="2">
    <source>
        <dbReference type="SAM" id="MobiDB-lite"/>
    </source>
</evidence>
<proteinExistence type="inferred from homology"/>
<feature type="chain" id="PRO_1000121975" description="Chromosomal replication initiator protein DnaA">
    <location>
        <begin position="1"/>
        <end position="467"/>
    </location>
</feature>
<feature type="region of interest" description="Domain I, interacts with DnaA modulators" evidence="1">
    <location>
        <begin position="1"/>
        <end position="90"/>
    </location>
</feature>
<feature type="region of interest" description="Domain II" evidence="1">
    <location>
        <begin position="91"/>
        <end position="130"/>
    </location>
</feature>
<feature type="region of interest" description="Disordered" evidence="2">
    <location>
        <begin position="98"/>
        <end position="119"/>
    </location>
</feature>
<feature type="region of interest" description="Domain III, AAA+ region" evidence="1">
    <location>
        <begin position="131"/>
        <end position="347"/>
    </location>
</feature>
<feature type="region of interest" description="Domain IV, binds dsDNA" evidence="1">
    <location>
        <begin position="348"/>
        <end position="467"/>
    </location>
</feature>
<feature type="compositionally biased region" description="Low complexity" evidence="2">
    <location>
        <begin position="98"/>
        <end position="111"/>
    </location>
</feature>
<feature type="binding site" evidence="1">
    <location>
        <position position="175"/>
    </location>
    <ligand>
        <name>ATP</name>
        <dbReference type="ChEBI" id="CHEBI:30616"/>
    </ligand>
</feature>
<feature type="binding site" evidence="1">
    <location>
        <position position="177"/>
    </location>
    <ligand>
        <name>ATP</name>
        <dbReference type="ChEBI" id="CHEBI:30616"/>
    </ligand>
</feature>
<feature type="binding site" evidence="1">
    <location>
        <position position="178"/>
    </location>
    <ligand>
        <name>ATP</name>
        <dbReference type="ChEBI" id="CHEBI:30616"/>
    </ligand>
</feature>
<feature type="binding site" evidence="1">
    <location>
        <position position="179"/>
    </location>
    <ligand>
        <name>ATP</name>
        <dbReference type="ChEBI" id="CHEBI:30616"/>
    </ligand>
</feature>